<keyword id="KW-0028">Amino-acid biosynthesis</keyword>
<keyword id="KW-0057">Aromatic amino acid biosynthesis</keyword>
<keyword id="KW-0274">FAD</keyword>
<keyword id="KW-0285">Flavoprotein</keyword>
<keyword id="KW-0288">FMN</keyword>
<keyword id="KW-0456">Lyase</keyword>
<keyword id="KW-0521">NADP</keyword>
<evidence type="ECO:0000255" key="1">
    <source>
        <dbReference type="HAMAP-Rule" id="MF_00300"/>
    </source>
</evidence>
<reference key="1">
    <citation type="journal article" date="2006" name="PLoS Genet.">
        <title>The complete genome sequence and comparative genome analysis of the high pathogenicity Yersinia enterocolitica strain 8081.</title>
        <authorList>
            <person name="Thomson N.R."/>
            <person name="Howard S."/>
            <person name="Wren B.W."/>
            <person name="Holden M.T.G."/>
            <person name="Crossman L."/>
            <person name="Challis G.L."/>
            <person name="Churcher C."/>
            <person name="Mungall K."/>
            <person name="Brooks K."/>
            <person name="Chillingworth T."/>
            <person name="Feltwell T."/>
            <person name="Abdellah Z."/>
            <person name="Hauser H."/>
            <person name="Jagels K."/>
            <person name="Maddison M."/>
            <person name="Moule S."/>
            <person name="Sanders M."/>
            <person name="Whitehead S."/>
            <person name="Quail M.A."/>
            <person name="Dougan G."/>
            <person name="Parkhill J."/>
            <person name="Prentice M.B."/>
        </authorList>
    </citation>
    <scope>NUCLEOTIDE SEQUENCE [LARGE SCALE GENOMIC DNA]</scope>
    <source>
        <strain>NCTC 13174 / 8081</strain>
    </source>
</reference>
<accession>A1JK48</accession>
<feature type="chain" id="PRO_1000022572" description="Chorismate synthase">
    <location>
        <begin position="1"/>
        <end position="361"/>
    </location>
</feature>
<feature type="binding site" evidence="1">
    <location>
        <position position="48"/>
    </location>
    <ligand>
        <name>NADP(+)</name>
        <dbReference type="ChEBI" id="CHEBI:58349"/>
    </ligand>
</feature>
<feature type="binding site" evidence="1">
    <location>
        <position position="54"/>
    </location>
    <ligand>
        <name>NADP(+)</name>
        <dbReference type="ChEBI" id="CHEBI:58349"/>
    </ligand>
</feature>
<feature type="binding site" evidence="1">
    <location>
        <begin position="125"/>
        <end position="127"/>
    </location>
    <ligand>
        <name>FMN</name>
        <dbReference type="ChEBI" id="CHEBI:58210"/>
    </ligand>
</feature>
<feature type="binding site" evidence="1">
    <location>
        <begin position="238"/>
        <end position="239"/>
    </location>
    <ligand>
        <name>FMN</name>
        <dbReference type="ChEBI" id="CHEBI:58210"/>
    </ligand>
</feature>
<feature type="binding site" evidence="1">
    <location>
        <position position="278"/>
    </location>
    <ligand>
        <name>FMN</name>
        <dbReference type="ChEBI" id="CHEBI:58210"/>
    </ligand>
</feature>
<feature type="binding site" evidence="1">
    <location>
        <begin position="293"/>
        <end position="297"/>
    </location>
    <ligand>
        <name>FMN</name>
        <dbReference type="ChEBI" id="CHEBI:58210"/>
    </ligand>
</feature>
<feature type="binding site" evidence="1">
    <location>
        <position position="319"/>
    </location>
    <ligand>
        <name>FMN</name>
        <dbReference type="ChEBI" id="CHEBI:58210"/>
    </ligand>
</feature>
<gene>
    <name evidence="1" type="primary">aroC</name>
    <name type="ordered locus">YE1281</name>
</gene>
<organism>
    <name type="scientific">Yersinia enterocolitica serotype O:8 / biotype 1B (strain NCTC 13174 / 8081)</name>
    <dbReference type="NCBI Taxonomy" id="393305"/>
    <lineage>
        <taxon>Bacteria</taxon>
        <taxon>Pseudomonadati</taxon>
        <taxon>Pseudomonadota</taxon>
        <taxon>Gammaproteobacteria</taxon>
        <taxon>Enterobacterales</taxon>
        <taxon>Yersiniaceae</taxon>
        <taxon>Yersinia</taxon>
    </lineage>
</organism>
<dbReference type="EC" id="4.2.3.5" evidence="1"/>
<dbReference type="EMBL" id="AM286415">
    <property type="protein sequence ID" value="CAL11373.1"/>
    <property type="molecule type" value="Genomic_DNA"/>
</dbReference>
<dbReference type="RefSeq" id="WP_005171931.1">
    <property type="nucleotide sequence ID" value="NC_008800.1"/>
</dbReference>
<dbReference type="RefSeq" id="YP_001005602.1">
    <property type="nucleotide sequence ID" value="NC_008800.1"/>
</dbReference>
<dbReference type="SMR" id="A1JK48"/>
<dbReference type="KEGG" id="yen:YE1281"/>
<dbReference type="PATRIC" id="fig|393305.7.peg.1391"/>
<dbReference type="eggNOG" id="COG0082">
    <property type="taxonomic scope" value="Bacteria"/>
</dbReference>
<dbReference type="HOGENOM" id="CLU_034547_0_2_6"/>
<dbReference type="OrthoDB" id="9771806at2"/>
<dbReference type="UniPathway" id="UPA00053">
    <property type="reaction ID" value="UER00090"/>
</dbReference>
<dbReference type="Proteomes" id="UP000000642">
    <property type="component" value="Chromosome"/>
</dbReference>
<dbReference type="GO" id="GO:0005829">
    <property type="term" value="C:cytosol"/>
    <property type="evidence" value="ECO:0007669"/>
    <property type="project" value="TreeGrafter"/>
</dbReference>
<dbReference type="GO" id="GO:0004107">
    <property type="term" value="F:chorismate synthase activity"/>
    <property type="evidence" value="ECO:0007669"/>
    <property type="project" value="UniProtKB-UniRule"/>
</dbReference>
<dbReference type="GO" id="GO:0010181">
    <property type="term" value="F:FMN binding"/>
    <property type="evidence" value="ECO:0007669"/>
    <property type="project" value="TreeGrafter"/>
</dbReference>
<dbReference type="GO" id="GO:0008652">
    <property type="term" value="P:amino acid biosynthetic process"/>
    <property type="evidence" value="ECO:0007669"/>
    <property type="project" value="UniProtKB-KW"/>
</dbReference>
<dbReference type="GO" id="GO:0009073">
    <property type="term" value="P:aromatic amino acid family biosynthetic process"/>
    <property type="evidence" value="ECO:0007669"/>
    <property type="project" value="UniProtKB-KW"/>
</dbReference>
<dbReference type="GO" id="GO:0009423">
    <property type="term" value="P:chorismate biosynthetic process"/>
    <property type="evidence" value="ECO:0007669"/>
    <property type="project" value="UniProtKB-UniRule"/>
</dbReference>
<dbReference type="CDD" id="cd07304">
    <property type="entry name" value="Chorismate_synthase"/>
    <property type="match status" value="1"/>
</dbReference>
<dbReference type="FunFam" id="3.60.150.10:FF:000001">
    <property type="entry name" value="Chorismate synthase"/>
    <property type="match status" value="1"/>
</dbReference>
<dbReference type="Gene3D" id="3.60.150.10">
    <property type="entry name" value="Chorismate synthase AroC"/>
    <property type="match status" value="1"/>
</dbReference>
<dbReference type="HAMAP" id="MF_00300">
    <property type="entry name" value="Chorismate_synth"/>
    <property type="match status" value="1"/>
</dbReference>
<dbReference type="InterPro" id="IPR000453">
    <property type="entry name" value="Chorismate_synth"/>
</dbReference>
<dbReference type="InterPro" id="IPR035904">
    <property type="entry name" value="Chorismate_synth_AroC_sf"/>
</dbReference>
<dbReference type="InterPro" id="IPR020541">
    <property type="entry name" value="Chorismate_synthase_CS"/>
</dbReference>
<dbReference type="NCBIfam" id="TIGR00033">
    <property type="entry name" value="aroC"/>
    <property type="match status" value="1"/>
</dbReference>
<dbReference type="NCBIfam" id="NF003793">
    <property type="entry name" value="PRK05382.1"/>
    <property type="match status" value="1"/>
</dbReference>
<dbReference type="PANTHER" id="PTHR21085">
    <property type="entry name" value="CHORISMATE SYNTHASE"/>
    <property type="match status" value="1"/>
</dbReference>
<dbReference type="PANTHER" id="PTHR21085:SF0">
    <property type="entry name" value="CHORISMATE SYNTHASE"/>
    <property type="match status" value="1"/>
</dbReference>
<dbReference type="Pfam" id="PF01264">
    <property type="entry name" value="Chorismate_synt"/>
    <property type="match status" value="1"/>
</dbReference>
<dbReference type="PIRSF" id="PIRSF001456">
    <property type="entry name" value="Chorismate_synth"/>
    <property type="match status" value="1"/>
</dbReference>
<dbReference type="SUPFAM" id="SSF103263">
    <property type="entry name" value="Chorismate synthase, AroC"/>
    <property type="match status" value="1"/>
</dbReference>
<dbReference type="PROSITE" id="PS00787">
    <property type="entry name" value="CHORISMATE_SYNTHASE_1"/>
    <property type="match status" value="1"/>
</dbReference>
<dbReference type="PROSITE" id="PS00788">
    <property type="entry name" value="CHORISMATE_SYNTHASE_2"/>
    <property type="match status" value="1"/>
</dbReference>
<dbReference type="PROSITE" id="PS00789">
    <property type="entry name" value="CHORISMATE_SYNTHASE_3"/>
    <property type="match status" value="1"/>
</dbReference>
<sequence>MAGNSIGQFFRVTTFGESHGIALGCIIDGVPPGIPITEADIQLDLDRRRPGTSRYTTQRREPDQVRILSGIFEGVTTGTSIGLMIENTDQRSQDYSAIKDVFRPGHADYTYEQKYGVRDYRGGGRSSARETAMRVAAGAIAKKYLAQKFGVQVRGYLAQIGDISCDVVDWDQVEQNPFFCPDASKLESLDALMRELKKAGDSIGAKITVVAEHVPVGLGEPVFDRLDADLAHALMSINAVKGVEIGDGFAVVTKRGSENRDEITPQGFQSNHAGGILGGISSGQPVVAHIALKPTSSITVPGQTINRQGEAVEMITRGRHDPCVGIRAVPIAEAMMAIVLMDHLLRQRAQCGDVVSDVPRW</sequence>
<protein>
    <recommendedName>
        <fullName evidence="1">Chorismate synthase</fullName>
        <shortName evidence="1">CS</shortName>
        <ecNumber evidence="1">4.2.3.5</ecNumber>
    </recommendedName>
    <alternativeName>
        <fullName evidence="1">5-enolpyruvylshikimate-3-phosphate phospholyase</fullName>
    </alternativeName>
</protein>
<proteinExistence type="inferred from homology"/>
<name>AROC_YERE8</name>
<comment type="function">
    <text evidence="1">Catalyzes the anti-1,4-elimination of the C-3 phosphate and the C-6 proR hydrogen from 5-enolpyruvylshikimate-3-phosphate (EPSP) to yield chorismate, which is the branch point compound that serves as the starting substrate for the three terminal pathways of aromatic amino acid biosynthesis. This reaction introduces a second double bond into the aromatic ring system.</text>
</comment>
<comment type="catalytic activity">
    <reaction evidence="1">
        <text>5-O-(1-carboxyvinyl)-3-phosphoshikimate = chorismate + phosphate</text>
        <dbReference type="Rhea" id="RHEA:21020"/>
        <dbReference type="ChEBI" id="CHEBI:29748"/>
        <dbReference type="ChEBI" id="CHEBI:43474"/>
        <dbReference type="ChEBI" id="CHEBI:57701"/>
        <dbReference type="EC" id="4.2.3.5"/>
    </reaction>
</comment>
<comment type="cofactor">
    <cofactor evidence="1">
        <name>FMNH2</name>
        <dbReference type="ChEBI" id="CHEBI:57618"/>
    </cofactor>
    <text evidence="1">Reduced FMN (FMNH(2)).</text>
</comment>
<comment type="pathway">
    <text evidence="1">Metabolic intermediate biosynthesis; chorismate biosynthesis; chorismate from D-erythrose 4-phosphate and phosphoenolpyruvate: step 7/7.</text>
</comment>
<comment type="subunit">
    <text evidence="1">Homotetramer.</text>
</comment>
<comment type="similarity">
    <text evidence="1">Belongs to the chorismate synthase family.</text>
</comment>